<evidence type="ECO:0000255" key="1">
    <source>
        <dbReference type="HAMAP-Rule" id="MF_01013"/>
    </source>
</evidence>
<accession>B1X6W2</accession>
<comment type="function">
    <text evidence="1">IGPS catalyzes the conversion of PRFAR and glutamine to IGP, AICAR and glutamate. The HisF subunit catalyzes the cyclization activity that produces IGP and AICAR from PRFAR using the ammonia provided by the HisH subunit.</text>
</comment>
<comment type="catalytic activity">
    <reaction evidence="1">
        <text>5-[(5-phospho-1-deoxy-D-ribulos-1-ylimino)methylamino]-1-(5-phospho-beta-D-ribosyl)imidazole-4-carboxamide + L-glutamine = D-erythro-1-(imidazol-4-yl)glycerol 3-phosphate + 5-amino-1-(5-phospho-beta-D-ribosyl)imidazole-4-carboxamide + L-glutamate + H(+)</text>
        <dbReference type="Rhea" id="RHEA:24793"/>
        <dbReference type="ChEBI" id="CHEBI:15378"/>
        <dbReference type="ChEBI" id="CHEBI:29985"/>
        <dbReference type="ChEBI" id="CHEBI:58278"/>
        <dbReference type="ChEBI" id="CHEBI:58359"/>
        <dbReference type="ChEBI" id="CHEBI:58475"/>
        <dbReference type="ChEBI" id="CHEBI:58525"/>
        <dbReference type="EC" id="4.3.2.10"/>
    </reaction>
</comment>
<comment type="pathway">
    <text evidence="1">Amino-acid biosynthesis; L-histidine biosynthesis; L-histidine from 5-phospho-alpha-D-ribose 1-diphosphate: step 5/9.</text>
</comment>
<comment type="subunit">
    <text evidence="1">Heterodimer of HisH and HisF.</text>
</comment>
<comment type="subcellular location">
    <subcellularLocation>
        <location evidence="1">Cytoplasm</location>
    </subcellularLocation>
</comment>
<comment type="similarity">
    <text evidence="1">Belongs to the HisA/HisF family.</text>
</comment>
<dbReference type="EC" id="4.3.2.10" evidence="1"/>
<dbReference type="EMBL" id="CP000948">
    <property type="protein sequence ID" value="ACB03198.1"/>
    <property type="molecule type" value="Genomic_DNA"/>
</dbReference>
<dbReference type="RefSeq" id="WP_000880182.1">
    <property type="nucleotide sequence ID" value="NC_010473.1"/>
</dbReference>
<dbReference type="SMR" id="B1X6W2"/>
<dbReference type="GeneID" id="86946979"/>
<dbReference type="KEGG" id="ecd:ECDH10B_2173"/>
<dbReference type="HOGENOM" id="CLU_048577_4_0_6"/>
<dbReference type="UniPathway" id="UPA00031">
    <property type="reaction ID" value="UER00010"/>
</dbReference>
<dbReference type="GO" id="GO:0005737">
    <property type="term" value="C:cytoplasm"/>
    <property type="evidence" value="ECO:0007669"/>
    <property type="project" value="UniProtKB-SubCell"/>
</dbReference>
<dbReference type="GO" id="GO:0000107">
    <property type="term" value="F:imidazoleglycerol-phosphate synthase activity"/>
    <property type="evidence" value="ECO:0007669"/>
    <property type="project" value="UniProtKB-UniRule"/>
</dbReference>
<dbReference type="GO" id="GO:0016829">
    <property type="term" value="F:lyase activity"/>
    <property type="evidence" value="ECO:0007669"/>
    <property type="project" value="UniProtKB-KW"/>
</dbReference>
<dbReference type="GO" id="GO:0000105">
    <property type="term" value="P:L-histidine biosynthetic process"/>
    <property type="evidence" value="ECO:0007669"/>
    <property type="project" value="UniProtKB-UniRule"/>
</dbReference>
<dbReference type="CDD" id="cd04731">
    <property type="entry name" value="HisF"/>
    <property type="match status" value="1"/>
</dbReference>
<dbReference type="FunFam" id="3.20.20.70:FF:000006">
    <property type="entry name" value="Imidazole glycerol phosphate synthase subunit HisF"/>
    <property type="match status" value="1"/>
</dbReference>
<dbReference type="Gene3D" id="3.20.20.70">
    <property type="entry name" value="Aldolase class I"/>
    <property type="match status" value="1"/>
</dbReference>
<dbReference type="HAMAP" id="MF_01013">
    <property type="entry name" value="HisF"/>
    <property type="match status" value="1"/>
</dbReference>
<dbReference type="InterPro" id="IPR013785">
    <property type="entry name" value="Aldolase_TIM"/>
</dbReference>
<dbReference type="InterPro" id="IPR006062">
    <property type="entry name" value="His_biosynth"/>
</dbReference>
<dbReference type="InterPro" id="IPR004651">
    <property type="entry name" value="HisF"/>
</dbReference>
<dbReference type="InterPro" id="IPR050064">
    <property type="entry name" value="IGPS_HisA/HisF"/>
</dbReference>
<dbReference type="InterPro" id="IPR011060">
    <property type="entry name" value="RibuloseP-bd_barrel"/>
</dbReference>
<dbReference type="NCBIfam" id="TIGR00735">
    <property type="entry name" value="hisF"/>
    <property type="match status" value="1"/>
</dbReference>
<dbReference type="PANTHER" id="PTHR21235:SF2">
    <property type="entry name" value="IMIDAZOLE GLYCEROL PHOSPHATE SYNTHASE HISHF"/>
    <property type="match status" value="1"/>
</dbReference>
<dbReference type="PANTHER" id="PTHR21235">
    <property type="entry name" value="IMIDAZOLE GLYCEROL PHOSPHATE SYNTHASE SUBUNIT HISF/H IGP SYNTHASE SUBUNIT HISF/H"/>
    <property type="match status" value="1"/>
</dbReference>
<dbReference type="Pfam" id="PF00977">
    <property type="entry name" value="His_biosynth"/>
    <property type="match status" value="1"/>
</dbReference>
<dbReference type="SUPFAM" id="SSF51366">
    <property type="entry name" value="Ribulose-phoshate binding barrel"/>
    <property type="match status" value="1"/>
</dbReference>
<gene>
    <name evidence="1" type="primary">hisF</name>
    <name type="ordered locus">ECDH10B_2173</name>
</gene>
<feature type="chain" id="PRO_1000134997" description="Imidazole glycerol phosphate synthase subunit HisF">
    <location>
        <begin position="1"/>
        <end position="258"/>
    </location>
</feature>
<feature type="active site" evidence="1">
    <location>
        <position position="11"/>
    </location>
</feature>
<feature type="active site" evidence="1">
    <location>
        <position position="130"/>
    </location>
</feature>
<reference key="1">
    <citation type="journal article" date="2008" name="J. Bacteriol.">
        <title>The complete genome sequence of Escherichia coli DH10B: insights into the biology of a laboratory workhorse.</title>
        <authorList>
            <person name="Durfee T."/>
            <person name="Nelson R."/>
            <person name="Baldwin S."/>
            <person name="Plunkett G. III"/>
            <person name="Burland V."/>
            <person name="Mau B."/>
            <person name="Petrosino J.F."/>
            <person name="Qin X."/>
            <person name="Muzny D.M."/>
            <person name="Ayele M."/>
            <person name="Gibbs R.A."/>
            <person name="Csorgo B."/>
            <person name="Posfai G."/>
            <person name="Weinstock G.M."/>
            <person name="Blattner F.R."/>
        </authorList>
    </citation>
    <scope>NUCLEOTIDE SEQUENCE [LARGE SCALE GENOMIC DNA]</scope>
    <source>
        <strain>K12 / DH10B</strain>
    </source>
</reference>
<keyword id="KW-0028">Amino-acid biosynthesis</keyword>
<keyword id="KW-0963">Cytoplasm</keyword>
<keyword id="KW-0368">Histidine biosynthesis</keyword>
<keyword id="KW-0456">Lyase</keyword>
<proteinExistence type="inferred from homology"/>
<sequence length="258" mass="28454">MLAKRIIPCLDVRDGQVVKGVQFRNHEIIGDIVPLAKRYAEEGADELVFYDITASSDGRVVDKSWVSRVAEVIDIPFCVAGGIKSLEDAAKILSFGADKISINSPALADPTLITRLADRFGVQCIVVGIDTWYDAETGKYHVNQYTGDESRTRVTQWETLDWVQEVQKRGAGEIVLNMMNQDGVRNGYDLEQLKKVREVCHVPLIASGGAGTMEHFLEAFRDADVDGALAASVFHKQIINIGELKAYLATQGVEIRIC</sequence>
<name>HIS6_ECODH</name>
<protein>
    <recommendedName>
        <fullName evidence="1">Imidazole glycerol phosphate synthase subunit HisF</fullName>
        <ecNumber evidence="1">4.3.2.10</ecNumber>
    </recommendedName>
    <alternativeName>
        <fullName evidence="1">IGP synthase cyclase subunit</fullName>
    </alternativeName>
    <alternativeName>
        <fullName evidence="1">IGP synthase subunit HisF</fullName>
    </alternativeName>
    <alternativeName>
        <fullName evidence="1">ImGP synthase subunit HisF</fullName>
        <shortName evidence="1">IGPS subunit HisF</shortName>
    </alternativeName>
</protein>
<organism>
    <name type="scientific">Escherichia coli (strain K12 / DH10B)</name>
    <dbReference type="NCBI Taxonomy" id="316385"/>
    <lineage>
        <taxon>Bacteria</taxon>
        <taxon>Pseudomonadati</taxon>
        <taxon>Pseudomonadota</taxon>
        <taxon>Gammaproteobacteria</taxon>
        <taxon>Enterobacterales</taxon>
        <taxon>Enterobacteriaceae</taxon>
        <taxon>Escherichia</taxon>
    </lineage>
</organism>